<gene>
    <name type="primary">MAGEB4</name>
</gene>
<organism>
    <name type="scientific">Homo sapiens</name>
    <name type="common">Human</name>
    <dbReference type="NCBI Taxonomy" id="9606"/>
    <lineage>
        <taxon>Eukaryota</taxon>
        <taxon>Metazoa</taxon>
        <taxon>Chordata</taxon>
        <taxon>Craniata</taxon>
        <taxon>Vertebrata</taxon>
        <taxon>Euteleostomi</taxon>
        <taxon>Mammalia</taxon>
        <taxon>Eutheria</taxon>
        <taxon>Euarchontoglires</taxon>
        <taxon>Primates</taxon>
        <taxon>Haplorrhini</taxon>
        <taxon>Catarrhini</taxon>
        <taxon>Hominidae</taxon>
        <taxon>Homo</taxon>
    </lineage>
</organism>
<accession>O15481</accession>
<accession>B2R9G0</accession>
<accession>Q6FHH4</accession>
<accession>Q8IZ00</accession>
<evidence type="ECO:0000250" key="1">
    <source>
        <dbReference type="UniProtKB" id="A2A9R3"/>
    </source>
</evidence>
<evidence type="ECO:0000255" key="2">
    <source>
        <dbReference type="PROSITE-ProRule" id="PRU00127"/>
    </source>
</evidence>
<evidence type="ECO:0000256" key="3">
    <source>
        <dbReference type="SAM" id="MobiDB-lite"/>
    </source>
</evidence>
<evidence type="ECO:0000305" key="4"/>
<keyword id="KW-0963">Cytoplasm</keyword>
<keyword id="KW-1267">Proteomics identification</keyword>
<keyword id="KW-1185">Reference proteome</keyword>
<keyword id="KW-0825">Tumor antigen</keyword>
<reference key="1">
    <citation type="journal article" date="1997" name="Genomics">
        <title>Two members of the human MAGEB gene family located in Xp21.3 are expressed in tumors of various histological origins.</title>
        <authorList>
            <person name="Lurquin C."/>
            <person name="De Smet C."/>
            <person name="Brasseur F."/>
            <person name="Muscatelli F."/>
            <person name="Martelange V."/>
            <person name="De Plaen E."/>
            <person name="Brasseur R."/>
            <person name="Monaco A.P."/>
            <person name="Boon T."/>
        </authorList>
    </citation>
    <scope>NUCLEOTIDE SEQUENCE [GENOMIC DNA]</scope>
</reference>
<reference key="2">
    <citation type="submission" date="2004-06" db="EMBL/GenBank/DDBJ databases">
        <title>Cloning of human full open reading frames in Gateway(TM) system entry vector (pDONR201).</title>
        <authorList>
            <person name="Halleck A."/>
            <person name="Ebert L."/>
            <person name="Mkoundinya M."/>
            <person name="Schick M."/>
            <person name="Eisenstein S."/>
            <person name="Neubert P."/>
            <person name="Kstrang K."/>
            <person name="Schatten R."/>
            <person name="Shen B."/>
            <person name="Henze S."/>
            <person name="Mar W."/>
            <person name="Korn B."/>
            <person name="Zuo D."/>
            <person name="Hu Y."/>
            <person name="LaBaer J."/>
        </authorList>
    </citation>
    <scope>NUCLEOTIDE SEQUENCE [LARGE SCALE MRNA]</scope>
</reference>
<reference key="3">
    <citation type="journal article" date="2004" name="Nat. Genet.">
        <title>Complete sequencing and characterization of 21,243 full-length human cDNAs.</title>
        <authorList>
            <person name="Ota T."/>
            <person name="Suzuki Y."/>
            <person name="Nishikawa T."/>
            <person name="Otsuki T."/>
            <person name="Sugiyama T."/>
            <person name="Irie R."/>
            <person name="Wakamatsu A."/>
            <person name="Hayashi K."/>
            <person name="Sato H."/>
            <person name="Nagai K."/>
            <person name="Kimura K."/>
            <person name="Makita H."/>
            <person name="Sekine M."/>
            <person name="Obayashi M."/>
            <person name="Nishi T."/>
            <person name="Shibahara T."/>
            <person name="Tanaka T."/>
            <person name="Ishii S."/>
            <person name="Yamamoto J."/>
            <person name="Saito K."/>
            <person name="Kawai Y."/>
            <person name="Isono Y."/>
            <person name="Nakamura Y."/>
            <person name="Nagahari K."/>
            <person name="Murakami K."/>
            <person name="Yasuda T."/>
            <person name="Iwayanagi T."/>
            <person name="Wagatsuma M."/>
            <person name="Shiratori A."/>
            <person name="Sudo H."/>
            <person name="Hosoiri T."/>
            <person name="Kaku Y."/>
            <person name="Kodaira H."/>
            <person name="Kondo H."/>
            <person name="Sugawara M."/>
            <person name="Takahashi M."/>
            <person name="Kanda K."/>
            <person name="Yokoi T."/>
            <person name="Furuya T."/>
            <person name="Kikkawa E."/>
            <person name="Omura Y."/>
            <person name="Abe K."/>
            <person name="Kamihara K."/>
            <person name="Katsuta N."/>
            <person name="Sato K."/>
            <person name="Tanikawa M."/>
            <person name="Yamazaki M."/>
            <person name="Ninomiya K."/>
            <person name="Ishibashi T."/>
            <person name="Yamashita H."/>
            <person name="Murakawa K."/>
            <person name="Fujimori K."/>
            <person name="Tanai H."/>
            <person name="Kimata M."/>
            <person name="Watanabe M."/>
            <person name="Hiraoka S."/>
            <person name="Chiba Y."/>
            <person name="Ishida S."/>
            <person name="Ono Y."/>
            <person name="Takiguchi S."/>
            <person name="Watanabe S."/>
            <person name="Yosida M."/>
            <person name="Hotuta T."/>
            <person name="Kusano J."/>
            <person name="Kanehori K."/>
            <person name="Takahashi-Fujii A."/>
            <person name="Hara H."/>
            <person name="Tanase T.-O."/>
            <person name="Nomura Y."/>
            <person name="Togiya S."/>
            <person name="Komai F."/>
            <person name="Hara R."/>
            <person name="Takeuchi K."/>
            <person name="Arita M."/>
            <person name="Imose N."/>
            <person name="Musashino K."/>
            <person name="Yuuki H."/>
            <person name="Oshima A."/>
            <person name="Sasaki N."/>
            <person name="Aotsuka S."/>
            <person name="Yoshikawa Y."/>
            <person name="Matsunawa H."/>
            <person name="Ichihara T."/>
            <person name="Shiohata N."/>
            <person name="Sano S."/>
            <person name="Moriya S."/>
            <person name="Momiyama H."/>
            <person name="Satoh N."/>
            <person name="Takami S."/>
            <person name="Terashima Y."/>
            <person name="Suzuki O."/>
            <person name="Nakagawa S."/>
            <person name="Senoh A."/>
            <person name="Mizoguchi H."/>
            <person name="Goto Y."/>
            <person name="Shimizu F."/>
            <person name="Wakebe H."/>
            <person name="Hishigaki H."/>
            <person name="Watanabe T."/>
            <person name="Sugiyama A."/>
            <person name="Takemoto M."/>
            <person name="Kawakami B."/>
            <person name="Yamazaki M."/>
            <person name="Watanabe K."/>
            <person name="Kumagai A."/>
            <person name="Itakura S."/>
            <person name="Fukuzumi Y."/>
            <person name="Fujimori Y."/>
            <person name="Komiyama M."/>
            <person name="Tashiro H."/>
            <person name="Tanigami A."/>
            <person name="Fujiwara T."/>
            <person name="Ono T."/>
            <person name="Yamada K."/>
            <person name="Fujii Y."/>
            <person name="Ozaki K."/>
            <person name="Hirao M."/>
            <person name="Ohmori Y."/>
            <person name="Kawabata A."/>
            <person name="Hikiji T."/>
            <person name="Kobatake N."/>
            <person name="Inagaki H."/>
            <person name="Ikema Y."/>
            <person name="Okamoto S."/>
            <person name="Okitani R."/>
            <person name="Kawakami T."/>
            <person name="Noguchi S."/>
            <person name="Itoh T."/>
            <person name="Shigeta K."/>
            <person name="Senba T."/>
            <person name="Matsumura K."/>
            <person name="Nakajima Y."/>
            <person name="Mizuno T."/>
            <person name="Morinaga M."/>
            <person name="Sasaki M."/>
            <person name="Togashi T."/>
            <person name="Oyama M."/>
            <person name="Hata H."/>
            <person name="Watanabe M."/>
            <person name="Komatsu T."/>
            <person name="Mizushima-Sugano J."/>
            <person name="Satoh T."/>
            <person name="Shirai Y."/>
            <person name="Takahashi Y."/>
            <person name="Nakagawa K."/>
            <person name="Okumura K."/>
            <person name="Nagase T."/>
            <person name="Nomura N."/>
            <person name="Kikuchi H."/>
            <person name="Masuho Y."/>
            <person name="Yamashita R."/>
            <person name="Nakai K."/>
            <person name="Yada T."/>
            <person name="Nakamura Y."/>
            <person name="Ohara O."/>
            <person name="Isogai T."/>
            <person name="Sugano S."/>
        </authorList>
    </citation>
    <scope>NUCLEOTIDE SEQUENCE [LARGE SCALE MRNA]</scope>
    <source>
        <tissue>Testis</tissue>
    </source>
</reference>
<reference key="4">
    <citation type="journal article" date="2005" name="Nature">
        <title>The DNA sequence of the human X chromosome.</title>
        <authorList>
            <person name="Ross M.T."/>
            <person name="Grafham D.V."/>
            <person name="Coffey A.J."/>
            <person name="Scherer S."/>
            <person name="McLay K."/>
            <person name="Muzny D."/>
            <person name="Platzer M."/>
            <person name="Howell G.R."/>
            <person name="Burrows C."/>
            <person name="Bird C.P."/>
            <person name="Frankish A."/>
            <person name="Lovell F.L."/>
            <person name="Howe K.L."/>
            <person name="Ashurst J.L."/>
            <person name="Fulton R.S."/>
            <person name="Sudbrak R."/>
            <person name="Wen G."/>
            <person name="Jones M.C."/>
            <person name="Hurles M.E."/>
            <person name="Andrews T.D."/>
            <person name="Scott C.E."/>
            <person name="Searle S."/>
            <person name="Ramser J."/>
            <person name="Whittaker A."/>
            <person name="Deadman R."/>
            <person name="Carter N.P."/>
            <person name="Hunt S.E."/>
            <person name="Chen R."/>
            <person name="Cree A."/>
            <person name="Gunaratne P."/>
            <person name="Havlak P."/>
            <person name="Hodgson A."/>
            <person name="Metzker M.L."/>
            <person name="Richards S."/>
            <person name="Scott G."/>
            <person name="Steffen D."/>
            <person name="Sodergren E."/>
            <person name="Wheeler D.A."/>
            <person name="Worley K.C."/>
            <person name="Ainscough R."/>
            <person name="Ambrose K.D."/>
            <person name="Ansari-Lari M.A."/>
            <person name="Aradhya S."/>
            <person name="Ashwell R.I."/>
            <person name="Babbage A.K."/>
            <person name="Bagguley C.L."/>
            <person name="Ballabio A."/>
            <person name="Banerjee R."/>
            <person name="Barker G.E."/>
            <person name="Barlow K.F."/>
            <person name="Barrett I.P."/>
            <person name="Bates K.N."/>
            <person name="Beare D.M."/>
            <person name="Beasley H."/>
            <person name="Beasley O."/>
            <person name="Beck A."/>
            <person name="Bethel G."/>
            <person name="Blechschmidt K."/>
            <person name="Brady N."/>
            <person name="Bray-Allen S."/>
            <person name="Bridgeman A.M."/>
            <person name="Brown A.J."/>
            <person name="Brown M.J."/>
            <person name="Bonnin D."/>
            <person name="Bruford E.A."/>
            <person name="Buhay C."/>
            <person name="Burch P."/>
            <person name="Burford D."/>
            <person name="Burgess J."/>
            <person name="Burrill W."/>
            <person name="Burton J."/>
            <person name="Bye J.M."/>
            <person name="Carder C."/>
            <person name="Carrel L."/>
            <person name="Chako J."/>
            <person name="Chapman J.C."/>
            <person name="Chavez D."/>
            <person name="Chen E."/>
            <person name="Chen G."/>
            <person name="Chen Y."/>
            <person name="Chen Z."/>
            <person name="Chinault C."/>
            <person name="Ciccodicola A."/>
            <person name="Clark S.Y."/>
            <person name="Clarke G."/>
            <person name="Clee C.M."/>
            <person name="Clegg S."/>
            <person name="Clerc-Blankenburg K."/>
            <person name="Clifford K."/>
            <person name="Cobley V."/>
            <person name="Cole C.G."/>
            <person name="Conquer J.S."/>
            <person name="Corby N."/>
            <person name="Connor R.E."/>
            <person name="David R."/>
            <person name="Davies J."/>
            <person name="Davis C."/>
            <person name="Davis J."/>
            <person name="Delgado O."/>
            <person name="Deshazo D."/>
            <person name="Dhami P."/>
            <person name="Ding Y."/>
            <person name="Dinh H."/>
            <person name="Dodsworth S."/>
            <person name="Draper H."/>
            <person name="Dugan-Rocha S."/>
            <person name="Dunham A."/>
            <person name="Dunn M."/>
            <person name="Durbin K.J."/>
            <person name="Dutta I."/>
            <person name="Eades T."/>
            <person name="Ellwood M."/>
            <person name="Emery-Cohen A."/>
            <person name="Errington H."/>
            <person name="Evans K.L."/>
            <person name="Faulkner L."/>
            <person name="Francis F."/>
            <person name="Frankland J."/>
            <person name="Fraser A.E."/>
            <person name="Galgoczy P."/>
            <person name="Gilbert J."/>
            <person name="Gill R."/>
            <person name="Gloeckner G."/>
            <person name="Gregory S.G."/>
            <person name="Gribble S."/>
            <person name="Griffiths C."/>
            <person name="Grocock R."/>
            <person name="Gu Y."/>
            <person name="Gwilliam R."/>
            <person name="Hamilton C."/>
            <person name="Hart E.A."/>
            <person name="Hawes A."/>
            <person name="Heath P.D."/>
            <person name="Heitmann K."/>
            <person name="Hennig S."/>
            <person name="Hernandez J."/>
            <person name="Hinzmann B."/>
            <person name="Ho S."/>
            <person name="Hoffs M."/>
            <person name="Howden P.J."/>
            <person name="Huckle E.J."/>
            <person name="Hume J."/>
            <person name="Hunt P.J."/>
            <person name="Hunt A.R."/>
            <person name="Isherwood J."/>
            <person name="Jacob L."/>
            <person name="Johnson D."/>
            <person name="Jones S."/>
            <person name="de Jong P.J."/>
            <person name="Joseph S.S."/>
            <person name="Keenan S."/>
            <person name="Kelly S."/>
            <person name="Kershaw J.K."/>
            <person name="Khan Z."/>
            <person name="Kioschis P."/>
            <person name="Klages S."/>
            <person name="Knights A.J."/>
            <person name="Kosiura A."/>
            <person name="Kovar-Smith C."/>
            <person name="Laird G.K."/>
            <person name="Langford C."/>
            <person name="Lawlor S."/>
            <person name="Leversha M."/>
            <person name="Lewis L."/>
            <person name="Liu W."/>
            <person name="Lloyd C."/>
            <person name="Lloyd D.M."/>
            <person name="Loulseged H."/>
            <person name="Loveland J.E."/>
            <person name="Lovell J.D."/>
            <person name="Lozado R."/>
            <person name="Lu J."/>
            <person name="Lyne R."/>
            <person name="Ma J."/>
            <person name="Maheshwari M."/>
            <person name="Matthews L.H."/>
            <person name="McDowall J."/>
            <person name="McLaren S."/>
            <person name="McMurray A."/>
            <person name="Meidl P."/>
            <person name="Meitinger T."/>
            <person name="Milne S."/>
            <person name="Miner G."/>
            <person name="Mistry S.L."/>
            <person name="Morgan M."/>
            <person name="Morris S."/>
            <person name="Mueller I."/>
            <person name="Mullikin J.C."/>
            <person name="Nguyen N."/>
            <person name="Nordsiek G."/>
            <person name="Nyakatura G."/>
            <person name="O'dell C.N."/>
            <person name="Okwuonu G."/>
            <person name="Palmer S."/>
            <person name="Pandian R."/>
            <person name="Parker D."/>
            <person name="Parrish J."/>
            <person name="Pasternak S."/>
            <person name="Patel D."/>
            <person name="Pearce A.V."/>
            <person name="Pearson D.M."/>
            <person name="Pelan S.E."/>
            <person name="Perez L."/>
            <person name="Porter K.M."/>
            <person name="Ramsey Y."/>
            <person name="Reichwald K."/>
            <person name="Rhodes S."/>
            <person name="Ridler K.A."/>
            <person name="Schlessinger D."/>
            <person name="Schueler M.G."/>
            <person name="Sehra H.K."/>
            <person name="Shaw-Smith C."/>
            <person name="Shen H."/>
            <person name="Sheridan E.M."/>
            <person name="Shownkeen R."/>
            <person name="Skuce C.D."/>
            <person name="Smith M.L."/>
            <person name="Sotheran E.C."/>
            <person name="Steingruber H.E."/>
            <person name="Steward C.A."/>
            <person name="Storey R."/>
            <person name="Swann R.M."/>
            <person name="Swarbreck D."/>
            <person name="Tabor P.E."/>
            <person name="Taudien S."/>
            <person name="Taylor T."/>
            <person name="Teague B."/>
            <person name="Thomas K."/>
            <person name="Thorpe A."/>
            <person name="Timms K."/>
            <person name="Tracey A."/>
            <person name="Trevanion S."/>
            <person name="Tromans A.C."/>
            <person name="d'Urso M."/>
            <person name="Verduzco D."/>
            <person name="Villasana D."/>
            <person name="Waldron L."/>
            <person name="Wall M."/>
            <person name="Wang Q."/>
            <person name="Warren J."/>
            <person name="Warry G.L."/>
            <person name="Wei X."/>
            <person name="West A."/>
            <person name="Whitehead S.L."/>
            <person name="Whiteley M.N."/>
            <person name="Wilkinson J.E."/>
            <person name="Willey D.L."/>
            <person name="Williams G."/>
            <person name="Williams L."/>
            <person name="Williamson A."/>
            <person name="Williamson H."/>
            <person name="Wilming L."/>
            <person name="Woodmansey R.L."/>
            <person name="Wray P.W."/>
            <person name="Yen J."/>
            <person name="Zhang J."/>
            <person name="Zhou J."/>
            <person name="Zoghbi H."/>
            <person name="Zorilla S."/>
            <person name="Buck D."/>
            <person name="Reinhardt R."/>
            <person name="Poustka A."/>
            <person name="Rosenthal A."/>
            <person name="Lehrach H."/>
            <person name="Meindl A."/>
            <person name="Minx P.J."/>
            <person name="Hillier L.W."/>
            <person name="Willard H.F."/>
            <person name="Wilson R.K."/>
            <person name="Waterston R.H."/>
            <person name="Rice C.M."/>
            <person name="Vaudin M."/>
            <person name="Coulson A."/>
            <person name="Nelson D.L."/>
            <person name="Weinstock G."/>
            <person name="Sulston J.E."/>
            <person name="Durbin R.M."/>
            <person name="Hubbard T."/>
            <person name="Gibbs R.A."/>
            <person name="Beck S."/>
            <person name="Rogers J."/>
            <person name="Bentley D.R."/>
        </authorList>
    </citation>
    <scope>NUCLEOTIDE SEQUENCE [LARGE SCALE GENOMIC DNA]</scope>
</reference>
<reference key="5">
    <citation type="submission" date="2005-07" db="EMBL/GenBank/DDBJ databases">
        <authorList>
            <person name="Mural R.J."/>
            <person name="Istrail S."/>
            <person name="Sutton G.G."/>
            <person name="Florea L."/>
            <person name="Halpern A.L."/>
            <person name="Mobarry C.M."/>
            <person name="Lippert R."/>
            <person name="Walenz B."/>
            <person name="Shatkay H."/>
            <person name="Dew I."/>
            <person name="Miller J.R."/>
            <person name="Flanigan M.J."/>
            <person name="Edwards N.J."/>
            <person name="Bolanos R."/>
            <person name="Fasulo D."/>
            <person name="Halldorsson B.V."/>
            <person name="Hannenhalli S."/>
            <person name="Turner R."/>
            <person name="Yooseph S."/>
            <person name="Lu F."/>
            <person name="Nusskern D.R."/>
            <person name="Shue B.C."/>
            <person name="Zheng X.H."/>
            <person name="Zhong F."/>
            <person name="Delcher A.L."/>
            <person name="Huson D.H."/>
            <person name="Kravitz S.A."/>
            <person name="Mouchard L."/>
            <person name="Reinert K."/>
            <person name="Remington K.A."/>
            <person name="Clark A.G."/>
            <person name="Waterman M.S."/>
            <person name="Eichler E.E."/>
            <person name="Adams M.D."/>
            <person name="Hunkapiller M.W."/>
            <person name="Myers E.W."/>
            <person name="Venter J.C."/>
        </authorList>
    </citation>
    <scope>NUCLEOTIDE SEQUENCE [LARGE SCALE GENOMIC DNA]</scope>
</reference>
<reference key="6">
    <citation type="journal article" date="2004" name="Genome Res.">
        <title>The status, quality, and expansion of the NIH full-length cDNA project: the Mammalian Gene Collection (MGC).</title>
        <authorList>
            <consortium name="The MGC Project Team"/>
        </authorList>
    </citation>
    <scope>NUCLEOTIDE SEQUENCE [LARGE SCALE MRNA]</scope>
    <source>
        <tissue>Testis</tissue>
    </source>
</reference>
<feature type="chain" id="PRO_0000156715" description="Melanoma-associated antigen B4">
    <location>
        <begin position="1"/>
        <end position="346"/>
    </location>
</feature>
<feature type="domain" description="MAGE" evidence="2">
    <location>
        <begin position="109"/>
        <end position="307"/>
    </location>
</feature>
<feature type="region of interest" description="Disordered" evidence="3">
    <location>
        <begin position="1"/>
        <end position="107"/>
    </location>
</feature>
<feature type="region of interest" description="Disordered" evidence="3">
    <location>
        <begin position="311"/>
        <end position="346"/>
    </location>
</feature>
<feature type="compositionally biased region" description="Basic residues" evidence="3">
    <location>
        <begin position="1"/>
        <end position="18"/>
    </location>
</feature>
<feature type="compositionally biased region" description="Polar residues" evidence="3">
    <location>
        <begin position="45"/>
        <end position="54"/>
    </location>
</feature>
<feature type="compositionally biased region" description="Low complexity" evidence="3">
    <location>
        <begin position="92"/>
        <end position="101"/>
    </location>
</feature>
<feature type="compositionally biased region" description="Low complexity" evidence="3">
    <location>
        <begin position="318"/>
        <end position="346"/>
    </location>
</feature>
<feature type="sequence conflict" description="In Ref. 6; AAH32852." evidence="4" ref="6">
    <original>S</original>
    <variation>P</variation>
    <location>
        <position position="41"/>
    </location>
</feature>
<feature type="sequence conflict" description="In Ref. 6; AAH32852." evidence="4" ref="6">
    <original>D</original>
    <variation>Y</variation>
    <location>
        <position position="186"/>
    </location>
</feature>
<name>MAGB4_HUMAN</name>
<comment type="interaction">
    <interactant intactId="EBI-751857">
        <id>O15481</id>
    </interactant>
    <interactant intactId="EBI-5463075">
        <id>Q4LEZ3</id>
        <label>AARD</label>
    </interactant>
    <organismsDiffer>false</organismsDiffer>
    <experiments>3</experiments>
</comment>
<comment type="interaction">
    <interactant intactId="EBI-751857">
        <id>O15481</id>
    </interactant>
    <interactant intactId="EBI-17721098">
        <id>Q8WXI4-2</id>
        <label>ACOT11</label>
    </interactant>
    <organismsDiffer>false</organismsDiffer>
    <experiments>3</experiments>
</comment>
<comment type="interaction">
    <interactant intactId="EBI-751857">
        <id>O15481</id>
    </interactant>
    <interactant intactId="EBI-5458244">
        <id>Q99856</id>
        <label>ARID3A</label>
    </interactant>
    <organismsDiffer>false</organismsDiffer>
    <experiments>3</experiments>
</comment>
<comment type="interaction">
    <interactant intactId="EBI-751857">
        <id>O15481</id>
    </interactant>
    <interactant intactId="EBI-348630">
        <id>P78537</id>
        <label>BLOC1S1</label>
    </interactant>
    <organismsDiffer>false</organismsDiffer>
    <experiments>3</experiments>
</comment>
<comment type="interaction">
    <interactant intactId="EBI-751857">
        <id>O15481</id>
    </interactant>
    <interactant intactId="EBI-10171416">
        <id>Q96JN2-2</id>
        <label>CCDC136</label>
    </interactant>
    <organismsDiffer>false</organismsDiffer>
    <experiments>3</experiments>
</comment>
<comment type="interaction">
    <interactant intactId="EBI-751857">
        <id>O15481</id>
    </interactant>
    <interactant intactId="EBI-12105646">
        <id>Q49A88-3</id>
        <label>CCDC14</label>
    </interactant>
    <organismsDiffer>false</organismsDiffer>
    <experiments>3</experiments>
</comment>
<comment type="interaction">
    <interactant intactId="EBI-751857">
        <id>O15481</id>
    </interactant>
    <interactant intactId="EBI-12160437">
        <id>A8MTA8-2</id>
        <label>CIMIP2B</label>
    </interactant>
    <organismsDiffer>false</organismsDiffer>
    <experiments>5</experiments>
</comment>
<comment type="interaction">
    <interactant intactId="EBI-751857">
        <id>O15481</id>
    </interactant>
    <interactant intactId="EBI-739789">
        <id>Q92997</id>
        <label>DVL3</label>
    </interactant>
    <organismsDiffer>false</organismsDiffer>
    <experiments>3</experiments>
</comment>
<comment type="interaction">
    <interactant intactId="EBI-751857">
        <id>O15481</id>
    </interactant>
    <interactant intactId="EBI-12108304">
        <id>Q96AZ1</id>
        <label>EEF1AKMT3</label>
    </interactant>
    <organismsDiffer>false</organismsDiffer>
    <experiments>3</experiments>
</comment>
<comment type="interaction">
    <interactant intactId="EBI-751857">
        <id>O15481</id>
    </interactant>
    <interactant intactId="EBI-373319">
        <id>Q96C01</id>
        <label>FAM136A</label>
    </interactant>
    <organismsDiffer>false</organismsDiffer>
    <experiments>3</experiments>
</comment>
<comment type="interaction">
    <interactant intactId="EBI-751857">
        <id>O15481</id>
    </interactant>
    <interactant intactId="EBI-10183007">
        <id>Q96RJ6</id>
        <label>FERD3L</label>
    </interactant>
    <organismsDiffer>false</organismsDiffer>
    <experiments>3</experiments>
</comment>
<comment type="interaction">
    <interactant intactId="EBI-751857">
        <id>O15481</id>
    </interactant>
    <interactant intactId="EBI-23703366">
        <id>Q9BTI6</id>
        <label>FLOT2</label>
    </interactant>
    <organismsDiffer>false</organismsDiffer>
    <experiments>3</experiments>
</comment>
<comment type="interaction">
    <interactant intactId="EBI-751857">
        <id>O15481</id>
    </interactant>
    <interactant intactId="EBI-10268729">
        <id>Q8N9W4-2</id>
        <label>GOLGA6L2</label>
    </interactant>
    <organismsDiffer>false</organismsDiffer>
    <experiments>3</experiments>
</comment>
<comment type="interaction">
    <interactant intactId="EBI-751857">
        <id>O15481</id>
    </interactant>
    <interactant intactId="EBI-12068108">
        <id>Q9NW75-2</id>
        <label>GPATCH2</label>
    </interactant>
    <organismsDiffer>false</organismsDiffer>
    <experiments>3</experiments>
</comment>
<comment type="interaction">
    <interactant intactId="EBI-751857">
        <id>O15481</id>
    </interactant>
    <interactant intactId="EBI-6447217">
        <id>O75409</id>
        <label>H2AP</label>
    </interactant>
    <organismsDiffer>false</organismsDiffer>
    <experiments>3</experiments>
</comment>
<comment type="interaction">
    <interactant intactId="EBI-751857">
        <id>O15481</id>
    </interactant>
    <interactant intactId="EBI-740220">
        <id>O14964</id>
        <label>HGS</label>
    </interactant>
    <organismsDiffer>false</organismsDiffer>
    <experiments>3</experiments>
</comment>
<comment type="interaction">
    <interactant intactId="EBI-751857">
        <id>O15481</id>
    </interactant>
    <interactant intactId="EBI-8638439">
        <id>Q8IYA8</id>
        <label>IHO1</label>
    </interactant>
    <organismsDiffer>false</organismsDiffer>
    <experiments>3</experiments>
</comment>
<comment type="interaction">
    <interactant intactId="EBI-751857">
        <id>O15481</id>
    </interactant>
    <interactant intactId="EBI-2556193">
        <id>Q63ZY3</id>
        <label>KANK2</label>
    </interactant>
    <organismsDiffer>false</organismsDiffer>
    <experiments>6</experiments>
</comment>
<comment type="interaction">
    <interactant intactId="EBI-751857">
        <id>O15481</id>
    </interactant>
    <interactant intactId="EBI-1047263">
        <id>O76015</id>
        <label>KRT38</label>
    </interactant>
    <organismsDiffer>false</organismsDiffer>
    <experiments>5</experiments>
</comment>
<comment type="interaction">
    <interactant intactId="EBI-751857">
        <id>O15481</id>
    </interactant>
    <interactant intactId="EBI-741037">
        <id>Q9BRK4</id>
        <label>LZTS2</label>
    </interactant>
    <organismsDiffer>false</organismsDiffer>
    <experiments>3</experiments>
</comment>
<comment type="interaction">
    <interactant intactId="EBI-751857">
        <id>O15481</id>
    </interactant>
    <interactant intactId="EBI-10182930">
        <id>P43361</id>
        <label>MAGEA8</label>
    </interactant>
    <organismsDiffer>false</organismsDiffer>
    <experiments>3</experiments>
</comment>
<comment type="interaction">
    <interactant intactId="EBI-751857">
        <id>O15481</id>
    </interactant>
    <interactant intactId="EBI-394678">
        <id>Q13503</id>
        <label>MED21</label>
    </interactant>
    <organismsDiffer>false</organismsDiffer>
    <experiments>6</experiments>
</comment>
<comment type="interaction">
    <interactant intactId="EBI-751857">
        <id>O15481</id>
    </interactant>
    <interactant intactId="EBI-6165891">
        <id>Q14696</id>
        <label>MESD</label>
    </interactant>
    <organismsDiffer>false</organismsDiffer>
    <experiments>3</experiments>
</comment>
<comment type="interaction">
    <interactant intactId="EBI-751857">
        <id>O15481</id>
    </interactant>
    <interactant intactId="EBI-3917781">
        <id>Q9HD90</id>
        <label>NEUROD4</label>
    </interactant>
    <organismsDiffer>false</organismsDiffer>
    <experiments>5</experiments>
</comment>
<comment type="interaction">
    <interactant intactId="EBI-751857">
        <id>O15481</id>
    </interactant>
    <interactant intactId="EBI-356973">
        <id>O15212</id>
        <label>PFDN6</label>
    </interactant>
    <organismsDiffer>false</organismsDiffer>
    <experiments>3</experiments>
</comment>
<comment type="interaction">
    <interactant intactId="EBI-751857">
        <id>O15481</id>
    </interactant>
    <interactant intactId="EBI-79165">
        <id>Q9NRD5</id>
        <label>PICK1</label>
    </interactant>
    <organismsDiffer>false</organismsDiffer>
    <experiments>3</experiments>
</comment>
<comment type="interaction">
    <interactant intactId="EBI-751857">
        <id>O15481</id>
    </interactant>
    <interactant intactId="EBI-876651">
        <id>Q13464</id>
        <label>ROCK1</label>
    </interactant>
    <organismsDiffer>false</organismsDiffer>
    <experiments>6</experiments>
</comment>
<comment type="interaction">
    <interactant intactId="EBI-751857">
        <id>O15481</id>
    </interactant>
    <interactant intactId="EBI-747225">
        <id>Q59EK9</id>
        <label>RUNDC3A</label>
    </interactant>
    <organismsDiffer>false</organismsDiffer>
    <experiments>3</experiments>
</comment>
<comment type="interaction">
    <interactant intactId="EBI-751857">
        <id>O15481</id>
    </interactant>
    <interactant intactId="EBI-11957366">
        <id>Q59EK9-3</id>
        <label>RUNDC3A</label>
    </interactant>
    <organismsDiffer>false</organismsDiffer>
    <experiments>3</experiments>
</comment>
<comment type="interaction">
    <interactant intactId="EBI-751857">
        <id>O15481</id>
    </interactant>
    <interactant intactId="EBI-3923013">
        <id>O14796</id>
        <label>SH2D1B</label>
    </interactant>
    <organismsDiffer>false</organismsDiffer>
    <experiments>3</experiments>
</comment>
<comment type="interaction">
    <interactant intactId="EBI-751857">
        <id>O15481</id>
    </interactant>
    <interactant intactId="EBI-1765605">
        <id>Q96FV9</id>
        <label>THOC1</label>
    </interactant>
    <organismsDiffer>false</organismsDiffer>
    <experiments>3</experiments>
</comment>
<comment type="interaction">
    <interactant intactId="EBI-751857">
        <id>O15481</id>
    </interactant>
    <interactant intactId="EBI-10182881">
        <id>A1L306</id>
        <label>TNR</label>
    </interactant>
    <organismsDiffer>false</organismsDiffer>
    <experiments>3</experiments>
</comment>
<comment type="interaction">
    <interactant intactId="EBI-751857">
        <id>O15481</id>
    </interactant>
    <interactant intactId="EBI-743128">
        <id>P14927</id>
        <label>UQCRB</label>
    </interactant>
    <organismsDiffer>false</organismsDiffer>
    <experiments>3</experiments>
</comment>
<comment type="interaction">
    <interactant intactId="EBI-751857">
        <id>O15481</id>
    </interactant>
    <interactant intactId="EBI-739895">
        <id>Q8N6Y0</id>
        <label>USHBP1</label>
    </interactant>
    <organismsDiffer>false</organismsDiffer>
    <experiments>6</experiments>
</comment>
<comment type="interaction">
    <interactant intactId="EBI-751857">
        <id>O15481</id>
    </interactant>
    <interactant intactId="EBI-2513462">
        <id>Q9UHP3</id>
        <label>USP25</label>
    </interactant>
    <organismsDiffer>false</organismsDiffer>
    <experiments>3</experiments>
</comment>
<comment type="interaction">
    <interactant intactId="EBI-751857">
        <id>O15481</id>
    </interactant>
    <interactant intactId="EBI-714790">
        <id>O43379</id>
        <label>WDR62</label>
    </interactant>
    <organismsDiffer>false</organismsDiffer>
    <experiments>3</experiments>
</comment>
<comment type="interaction">
    <interactant intactId="EBI-751857">
        <id>O15481</id>
    </interactant>
    <interactant intactId="EBI-9089622">
        <id>Q9BYN7</id>
        <label>ZNF341</label>
    </interactant>
    <organismsDiffer>false</organismsDiffer>
    <experiments>3</experiments>
</comment>
<comment type="interaction">
    <interactant intactId="EBI-751857">
        <id>O15481</id>
    </interactant>
    <interactant intactId="EBI-527853">
        <id>Q9UGI0</id>
        <label>ZRANB1</label>
    </interactant>
    <organismsDiffer>false</organismsDiffer>
    <experiments>3</experiments>
</comment>
<comment type="subcellular location">
    <subcellularLocation>
        <location evidence="1">Cytoplasm</location>
    </subcellularLocation>
</comment>
<comment type="tissue specificity">
    <text>Expressed in testis.</text>
</comment>
<dbReference type="EMBL" id="U93163">
    <property type="protein sequence ID" value="AAC23619.1"/>
    <property type="molecule type" value="Genomic_DNA"/>
</dbReference>
<dbReference type="EMBL" id="CR541779">
    <property type="protein sequence ID" value="CAG46578.1"/>
    <property type="molecule type" value="mRNA"/>
</dbReference>
<dbReference type="EMBL" id="AK313769">
    <property type="protein sequence ID" value="BAG36507.1"/>
    <property type="molecule type" value="mRNA"/>
</dbReference>
<dbReference type="EMBL" id="AC005185">
    <property type="protein sequence ID" value="AAD10637.1"/>
    <property type="molecule type" value="Genomic_DNA"/>
</dbReference>
<dbReference type="EMBL" id="CH471074">
    <property type="protein sequence ID" value="EAW99050.1"/>
    <property type="molecule type" value="Genomic_DNA"/>
</dbReference>
<dbReference type="EMBL" id="BC032852">
    <property type="protein sequence ID" value="AAH32852.1"/>
    <property type="molecule type" value="mRNA"/>
</dbReference>
<dbReference type="CCDS" id="CCDS14221.1"/>
<dbReference type="RefSeq" id="NP_002358.1">
    <property type="nucleotide sequence ID" value="NM_002367.4"/>
</dbReference>
<dbReference type="SMR" id="O15481"/>
<dbReference type="BioGRID" id="110289">
    <property type="interactions" value="64"/>
</dbReference>
<dbReference type="FunCoup" id="O15481">
    <property type="interactions" value="78"/>
</dbReference>
<dbReference type="IntAct" id="O15481">
    <property type="interactions" value="54"/>
</dbReference>
<dbReference type="STRING" id="9606.ENSP00000368266"/>
<dbReference type="GlyGen" id="O15481">
    <property type="glycosylation" value="1 site, 1 O-linked glycan (1 site)"/>
</dbReference>
<dbReference type="iPTMnet" id="O15481"/>
<dbReference type="PhosphoSitePlus" id="O15481"/>
<dbReference type="BioMuta" id="MAGEB4"/>
<dbReference type="jPOST" id="O15481"/>
<dbReference type="MassIVE" id="O15481"/>
<dbReference type="PaxDb" id="9606-ENSP00000368266"/>
<dbReference type="PeptideAtlas" id="O15481"/>
<dbReference type="ProteomicsDB" id="48686"/>
<dbReference type="Antibodypedia" id="24659">
    <property type="antibodies" value="232 antibodies from 28 providers"/>
</dbReference>
<dbReference type="DNASU" id="4115"/>
<dbReference type="Ensembl" id="ENST00000378982.4">
    <property type="protein sequence ID" value="ENSP00000368266.2"/>
    <property type="gene ID" value="ENSG00000120289.12"/>
</dbReference>
<dbReference type="GeneID" id="4115"/>
<dbReference type="KEGG" id="hsa:4115"/>
<dbReference type="MANE-Select" id="ENST00000378982.4">
    <property type="protein sequence ID" value="ENSP00000368266.2"/>
    <property type="RefSeq nucleotide sequence ID" value="NM_002367.4"/>
    <property type="RefSeq protein sequence ID" value="NP_002358.1"/>
</dbReference>
<dbReference type="UCSC" id="uc004dcb.4">
    <property type="organism name" value="human"/>
</dbReference>
<dbReference type="AGR" id="HGNC:6811"/>
<dbReference type="CTD" id="4115"/>
<dbReference type="DisGeNET" id="4115"/>
<dbReference type="GeneCards" id="MAGEB4"/>
<dbReference type="HGNC" id="HGNC:6811">
    <property type="gene designation" value="MAGEB4"/>
</dbReference>
<dbReference type="HPA" id="ENSG00000120289">
    <property type="expression patterns" value="Group enriched (epididymis, testis)"/>
</dbReference>
<dbReference type="MIM" id="300153">
    <property type="type" value="gene"/>
</dbReference>
<dbReference type="neXtProt" id="NX_O15481"/>
<dbReference type="OpenTargets" id="ENSG00000120289"/>
<dbReference type="PharmGKB" id="PA30557"/>
<dbReference type="VEuPathDB" id="HostDB:ENSG00000120289"/>
<dbReference type="eggNOG" id="KOG4562">
    <property type="taxonomic scope" value="Eukaryota"/>
</dbReference>
<dbReference type="GeneTree" id="ENSGT00940000165012"/>
<dbReference type="HOGENOM" id="CLU_039582_1_0_1"/>
<dbReference type="InParanoid" id="O15481"/>
<dbReference type="OMA" id="NGNCARE"/>
<dbReference type="OrthoDB" id="205198at2759"/>
<dbReference type="PAN-GO" id="O15481">
    <property type="GO annotations" value="2 GO annotations based on evolutionary models"/>
</dbReference>
<dbReference type="PhylomeDB" id="O15481"/>
<dbReference type="TreeFam" id="TF328505"/>
<dbReference type="PathwayCommons" id="O15481"/>
<dbReference type="SignaLink" id="O15481"/>
<dbReference type="BioGRID-ORCS" id="4115">
    <property type="hits" value="9 hits in 765 CRISPR screens"/>
</dbReference>
<dbReference type="GenomeRNAi" id="4115"/>
<dbReference type="Pharos" id="O15481">
    <property type="development level" value="Tdark"/>
</dbReference>
<dbReference type="PRO" id="PR:O15481"/>
<dbReference type="Proteomes" id="UP000005640">
    <property type="component" value="Chromosome X"/>
</dbReference>
<dbReference type="RNAct" id="O15481">
    <property type="molecule type" value="protein"/>
</dbReference>
<dbReference type="Bgee" id="ENSG00000120289">
    <property type="expression patterns" value="Expressed in corpus epididymis and 16 other cell types or tissues"/>
</dbReference>
<dbReference type="GO" id="GO:0005737">
    <property type="term" value="C:cytoplasm"/>
    <property type="evidence" value="ECO:0007669"/>
    <property type="project" value="UniProtKB-SubCell"/>
</dbReference>
<dbReference type="GO" id="GO:0005634">
    <property type="term" value="C:nucleus"/>
    <property type="evidence" value="ECO:0000318"/>
    <property type="project" value="GO_Central"/>
</dbReference>
<dbReference type="GO" id="GO:0000122">
    <property type="term" value="P:negative regulation of transcription by RNA polymerase II"/>
    <property type="evidence" value="ECO:0000318"/>
    <property type="project" value="GO_Central"/>
</dbReference>
<dbReference type="FunFam" id="1.10.10.1200:FF:000007">
    <property type="entry name" value="Melanoma-associated antigen C2"/>
    <property type="match status" value="1"/>
</dbReference>
<dbReference type="FunFam" id="1.10.10.1210:FF:000001">
    <property type="entry name" value="melanoma-associated antigen D1"/>
    <property type="match status" value="1"/>
</dbReference>
<dbReference type="Gene3D" id="1.10.10.1200">
    <property type="entry name" value="MAGE homology domain, winged helix WH1 motif"/>
    <property type="match status" value="1"/>
</dbReference>
<dbReference type="Gene3D" id="1.10.10.1210">
    <property type="entry name" value="MAGE homology domain, winged helix WH2 motif"/>
    <property type="match status" value="1"/>
</dbReference>
<dbReference type="InterPro" id="IPR037445">
    <property type="entry name" value="MAGE"/>
</dbReference>
<dbReference type="InterPro" id="IPR021072">
    <property type="entry name" value="MAGE_N"/>
</dbReference>
<dbReference type="InterPro" id="IPR041898">
    <property type="entry name" value="MAGE_WH1"/>
</dbReference>
<dbReference type="InterPro" id="IPR041899">
    <property type="entry name" value="MAGE_WH2"/>
</dbReference>
<dbReference type="InterPro" id="IPR002190">
    <property type="entry name" value="MHD_dom"/>
</dbReference>
<dbReference type="PANTHER" id="PTHR11736:SF162">
    <property type="entry name" value="MELANOMA-ASSOCIATED ANTIGEN B4"/>
    <property type="match status" value="1"/>
</dbReference>
<dbReference type="PANTHER" id="PTHR11736">
    <property type="entry name" value="MELANOMA-ASSOCIATED ANTIGEN MAGE ANTIGEN"/>
    <property type="match status" value="1"/>
</dbReference>
<dbReference type="Pfam" id="PF01454">
    <property type="entry name" value="MAGE"/>
    <property type="match status" value="1"/>
</dbReference>
<dbReference type="Pfam" id="PF12440">
    <property type="entry name" value="MAGE_N"/>
    <property type="match status" value="1"/>
</dbReference>
<dbReference type="SMART" id="SM01373">
    <property type="entry name" value="MAGE"/>
    <property type="match status" value="1"/>
</dbReference>
<dbReference type="SMART" id="SM01392">
    <property type="entry name" value="MAGE_N"/>
    <property type="match status" value="1"/>
</dbReference>
<dbReference type="PROSITE" id="PS50838">
    <property type="entry name" value="MAGE"/>
    <property type="match status" value="1"/>
</dbReference>
<protein>
    <recommendedName>
        <fullName>Melanoma-associated antigen B4</fullName>
    </recommendedName>
    <alternativeName>
        <fullName>MAGE-B4 antigen</fullName>
    </alternativeName>
</protein>
<proteinExistence type="evidence at protein level"/>
<sequence>MPRGQKSKLRAREKRQRTRGQTQDLKVGQPTAAEKEESPSSSSSVLRDTASSSLAFGIPQEPQREPPTTSAAAAMSCTGSDKGDESQDEENASSSQASTSTERSLKDSLTRKTKMLVQFLLYKYKMKEPTTKAEMLKIISKKYKEHFPEIFRKVSQRTELVFGLALKEVNPTTHSYILVSMLGPNDGNQSSAWTLPRNGLLMPLLSVIFLNGNCAREEEIWEFLNMLGIYDGKRHLIFGEPRKLITQDLVQEKYLEYQQVPNSDPPRYQFLWGPRAHAETSKMKVLEFLAKVNDTTPNNFPLLYEEALRDEEERAGARPRVAARRGTTAMTSAYSRATSSSSSQPM</sequence>